<organism>
    <name type="scientific">Escherichia coli O157:H7</name>
    <dbReference type="NCBI Taxonomy" id="83334"/>
    <lineage>
        <taxon>Bacteria</taxon>
        <taxon>Pseudomonadati</taxon>
        <taxon>Pseudomonadota</taxon>
        <taxon>Gammaproteobacteria</taxon>
        <taxon>Enterobacterales</taxon>
        <taxon>Enterobacteriaceae</taxon>
        <taxon>Escherichia</taxon>
    </lineage>
</organism>
<gene>
    <name type="primary">apaG</name>
    <name type="ordered locus">Z0059</name>
    <name type="ordered locus">ECs0055</name>
</gene>
<reference key="1">
    <citation type="journal article" date="2001" name="Nature">
        <title>Genome sequence of enterohaemorrhagic Escherichia coli O157:H7.</title>
        <authorList>
            <person name="Perna N.T."/>
            <person name="Plunkett G. III"/>
            <person name="Burland V."/>
            <person name="Mau B."/>
            <person name="Glasner J.D."/>
            <person name="Rose D.J."/>
            <person name="Mayhew G.F."/>
            <person name="Evans P.S."/>
            <person name="Gregor J."/>
            <person name="Kirkpatrick H.A."/>
            <person name="Posfai G."/>
            <person name="Hackett J."/>
            <person name="Klink S."/>
            <person name="Boutin A."/>
            <person name="Shao Y."/>
            <person name="Miller L."/>
            <person name="Grotbeck E.J."/>
            <person name="Davis N.W."/>
            <person name="Lim A."/>
            <person name="Dimalanta E.T."/>
            <person name="Potamousis K."/>
            <person name="Apodaca J."/>
            <person name="Anantharaman T.S."/>
            <person name="Lin J."/>
            <person name="Yen G."/>
            <person name="Schwartz D.C."/>
            <person name="Welch R.A."/>
            <person name="Blattner F.R."/>
        </authorList>
    </citation>
    <scope>NUCLEOTIDE SEQUENCE [LARGE SCALE GENOMIC DNA]</scope>
    <source>
        <strain>O157:H7 / EDL933 / ATCC 700927 / EHEC</strain>
    </source>
</reference>
<reference key="2">
    <citation type="journal article" date="2001" name="DNA Res.">
        <title>Complete genome sequence of enterohemorrhagic Escherichia coli O157:H7 and genomic comparison with a laboratory strain K-12.</title>
        <authorList>
            <person name="Hayashi T."/>
            <person name="Makino K."/>
            <person name="Ohnishi M."/>
            <person name="Kurokawa K."/>
            <person name="Ishii K."/>
            <person name="Yokoyama K."/>
            <person name="Han C.-G."/>
            <person name="Ohtsubo E."/>
            <person name="Nakayama K."/>
            <person name="Murata T."/>
            <person name="Tanaka M."/>
            <person name="Tobe T."/>
            <person name="Iida T."/>
            <person name="Takami H."/>
            <person name="Honda T."/>
            <person name="Sasakawa C."/>
            <person name="Ogasawara N."/>
            <person name="Yasunaga T."/>
            <person name="Kuhara S."/>
            <person name="Shiba T."/>
            <person name="Hattori M."/>
            <person name="Shinagawa H."/>
        </authorList>
    </citation>
    <scope>NUCLEOTIDE SEQUENCE [LARGE SCALE GENOMIC DNA]</scope>
    <source>
        <strain>O157:H7 / Sakai / RIMD 0509952 / EHEC</strain>
    </source>
</reference>
<dbReference type="EMBL" id="AE005174">
    <property type="protein sequence ID" value="AAG54355.1"/>
    <property type="molecule type" value="Genomic_DNA"/>
</dbReference>
<dbReference type="EMBL" id="BA000007">
    <property type="protein sequence ID" value="BAB33478.1"/>
    <property type="molecule type" value="Genomic_DNA"/>
</dbReference>
<dbReference type="PIR" id="G85486">
    <property type="entry name" value="G85486"/>
</dbReference>
<dbReference type="PIR" id="G90635">
    <property type="entry name" value="G90635"/>
</dbReference>
<dbReference type="RefSeq" id="NP_308082.1">
    <property type="nucleotide sequence ID" value="NC_002695.1"/>
</dbReference>
<dbReference type="RefSeq" id="WP_000610901.1">
    <property type="nucleotide sequence ID" value="NZ_VOAI01000002.1"/>
</dbReference>
<dbReference type="SMR" id="P62674"/>
<dbReference type="STRING" id="155864.Z0059"/>
<dbReference type="GeneID" id="913454"/>
<dbReference type="GeneID" id="93777385"/>
<dbReference type="KEGG" id="ece:Z0059"/>
<dbReference type="KEGG" id="ecs:ECs_0055"/>
<dbReference type="PATRIC" id="fig|386585.9.peg.154"/>
<dbReference type="eggNOG" id="COG2967">
    <property type="taxonomic scope" value="Bacteria"/>
</dbReference>
<dbReference type="HOGENOM" id="CLU_128074_0_0_6"/>
<dbReference type="OMA" id="MRGEYFC"/>
<dbReference type="Proteomes" id="UP000000558">
    <property type="component" value="Chromosome"/>
</dbReference>
<dbReference type="Proteomes" id="UP000002519">
    <property type="component" value="Chromosome"/>
</dbReference>
<dbReference type="GO" id="GO:0070987">
    <property type="term" value="P:error-free translesion synthesis"/>
    <property type="evidence" value="ECO:0007669"/>
    <property type="project" value="TreeGrafter"/>
</dbReference>
<dbReference type="Gene3D" id="2.60.40.1470">
    <property type="entry name" value="ApaG domain"/>
    <property type="match status" value="1"/>
</dbReference>
<dbReference type="HAMAP" id="MF_00791">
    <property type="entry name" value="ApaG"/>
    <property type="match status" value="1"/>
</dbReference>
<dbReference type="InterPro" id="IPR007474">
    <property type="entry name" value="ApaG_domain"/>
</dbReference>
<dbReference type="InterPro" id="IPR036767">
    <property type="entry name" value="ApaG_sf"/>
</dbReference>
<dbReference type="InterPro" id="IPR023065">
    <property type="entry name" value="Uncharacterised_ApaG"/>
</dbReference>
<dbReference type="NCBIfam" id="NF003967">
    <property type="entry name" value="PRK05461.1"/>
    <property type="match status" value="1"/>
</dbReference>
<dbReference type="PANTHER" id="PTHR14289">
    <property type="entry name" value="F-BOX ONLY PROTEIN 3"/>
    <property type="match status" value="1"/>
</dbReference>
<dbReference type="PANTHER" id="PTHR14289:SF16">
    <property type="entry name" value="POLYMERASE DELTA-INTERACTING PROTEIN 2"/>
    <property type="match status" value="1"/>
</dbReference>
<dbReference type="Pfam" id="PF04379">
    <property type="entry name" value="DUF525"/>
    <property type="match status" value="1"/>
</dbReference>
<dbReference type="SUPFAM" id="SSF110069">
    <property type="entry name" value="ApaG-like"/>
    <property type="match status" value="1"/>
</dbReference>
<dbReference type="PROSITE" id="PS51087">
    <property type="entry name" value="APAG"/>
    <property type="match status" value="1"/>
</dbReference>
<name>APAG_ECO57</name>
<accession>P62674</accession>
<accession>P05636</accession>
<feature type="chain" id="PRO_0000197948" description="Protein ApaG">
    <location>
        <begin position="1"/>
        <end position="125"/>
    </location>
</feature>
<feature type="domain" description="ApaG">
    <location>
        <begin position="1"/>
        <end position="125"/>
    </location>
</feature>
<keyword id="KW-1185">Reference proteome</keyword>
<protein>
    <recommendedName>
        <fullName>Protein ApaG</fullName>
    </recommendedName>
</protein>
<sequence>MINSPRVCIQVQSVYIEAQSSPDNERYVFAYTVTIRNLGRAPVQLLGRYWLITNGNGRETEVQGEGVVGVQPLIAPGEEYQYTSGAIIETPLGTMQGHYEMIDENGVPFSIDIPVFRLAVPTLIH</sequence>
<proteinExistence type="inferred from homology"/>